<organism>
    <name type="scientific">Oryza sativa subsp. japonica</name>
    <name type="common">Rice</name>
    <dbReference type="NCBI Taxonomy" id="39947"/>
    <lineage>
        <taxon>Eukaryota</taxon>
        <taxon>Viridiplantae</taxon>
        <taxon>Streptophyta</taxon>
        <taxon>Embryophyta</taxon>
        <taxon>Tracheophyta</taxon>
        <taxon>Spermatophyta</taxon>
        <taxon>Magnoliopsida</taxon>
        <taxon>Liliopsida</taxon>
        <taxon>Poales</taxon>
        <taxon>Poaceae</taxon>
        <taxon>BOP clade</taxon>
        <taxon>Oryzoideae</taxon>
        <taxon>Oryzeae</taxon>
        <taxon>Oryzinae</taxon>
        <taxon>Oryza</taxon>
        <taxon>Oryza sativa</taxon>
    </lineage>
</organism>
<name>RSZ21_ORYSJ</name>
<dbReference type="EMBL" id="AP003984">
    <property type="protein sequence ID" value="BAD19103.1"/>
    <property type="molecule type" value="Genomic_DNA"/>
</dbReference>
<dbReference type="EMBL" id="AP005535">
    <property type="protein sequence ID" value="BAD19873.1"/>
    <property type="molecule type" value="Genomic_DNA"/>
</dbReference>
<dbReference type="EMBL" id="AP008208">
    <property type="protein sequence ID" value="BAF10266.1"/>
    <property type="molecule type" value="Genomic_DNA"/>
</dbReference>
<dbReference type="EMBL" id="AP014958">
    <property type="protein sequence ID" value="BAS81304.1"/>
    <property type="molecule type" value="Genomic_DNA"/>
</dbReference>
<dbReference type="EMBL" id="CM000139">
    <property type="protein sequence ID" value="EEE57947.1"/>
    <property type="molecule type" value="Genomic_DNA"/>
</dbReference>
<dbReference type="EMBL" id="AK073210">
    <property type="protein sequence ID" value="BAG93345.1"/>
    <property type="molecule type" value="mRNA"/>
</dbReference>
<dbReference type="EMBL" id="AK073359">
    <property type="protein sequence ID" value="BAG93415.1"/>
    <property type="molecule type" value="mRNA"/>
</dbReference>
<dbReference type="RefSeq" id="XP_015622565.1">
    <property type="nucleotide sequence ID" value="XM_015767079.1"/>
</dbReference>
<dbReference type="RefSeq" id="XP_015622566.1">
    <property type="nucleotide sequence ID" value="XM_015767080.1"/>
</dbReference>
<dbReference type="RefSeq" id="XP_015622567.1">
    <property type="nucleotide sequence ID" value="XM_015767081.1"/>
</dbReference>
<dbReference type="SMR" id="Q6K4N0"/>
<dbReference type="FunCoup" id="Q6K4N0">
    <property type="interactions" value="1520"/>
</dbReference>
<dbReference type="STRING" id="39947.Q6K4N0"/>
<dbReference type="PaxDb" id="39947-Q6K4N0"/>
<dbReference type="EnsemblPlants" id="Os02t0789400-01">
    <property type="protein sequence ID" value="Os02t0789400-01"/>
    <property type="gene ID" value="Os02g0789400"/>
</dbReference>
<dbReference type="EnsemblPlants" id="Os02t0789400-02">
    <property type="protein sequence ID" value="Os02t0789400-02"/>
    <property type="gene ID" value="Os02g0789400"/>
</dbReference>
<dbReference type="Gramene" id="Os02t0789400-01">
    <property type="protein sequence ID" value="Os02t0789400-01"/>
    <property type="gene ID" value="Os02g0789400"/>
</dbReference>
<dbReference type="Gramene" id="Os02t0789400-02">
    <property type="protein sequence ID" value="Os02t0789400-02"/>
    <property type="gene ID" value="Os02g0789400"/>
</dbReference>
<dbReference type="KEGG" id="dosa:Os02g0789400"/>
<dbReference type="eggNOG" id="KOG0107">
    <property type="taxonomic scope" value="Eukaryota"/>
</dbReference>
<dbReference type="HOGENOM" id="CLU_012062_20_1_1"/>
<dbReference type="InParanoid" id="Q6K4N0"/>
<dbReference type="OMA" id="ASVWWEL"/>
<dbReference type="OrthoDB" id="5970at2759"/>
<dbReference type="Proteomes" id="UP000000763">
    <property type="component" value="Chromosome 2"/>
</dbReference>
<dbReference type="Proteomes" id="UP000007752">
    <property type="component" value="Chromosome 2"/>
</dbReference>
<dbReference type="Proteomes" id="UP000059680">
    <property type="component" value="Chromosome 2"/>
</dbReference>
<dbReference type="GO" id="GO:0016607">
    <property type="term" value="C:nuclear speck"/>
    <property type="evidence" value="ECO:0000318"/>
    <property type="project" value="GO_Central"/>
</dbReference>
<dbReference type="GO" id="GO:0003723">
    <property type="term" value="F:RNA binding"/>
    <property type="evidence" value="ECO:0000318"/>
    <property type="project" value="GO_Central"/>
</dbReference>
<dbReference type="GO" id="GO:0008270">
    <property type="term" value="F:zinc ion binding"/>
    <property type="evidence" value="ECO:0007669"/>
    <property type="project" value="UniProtKB-KW"/>
</dbReference>
<dbReference type="GO" id="GO:0045292">
    <property type="term" value="P:mRNA cis splicing, via spliceosome"/>
    <property type="evidence" value="ECO:0000318"/>
    <property type="project" value="GO_Central"/>
</dbReference>
<dbReference type="CDD" id="cd12373">
    <property type="entry name" value="RRM_SRSF3_like"/>
    <property type="match status" value="1"/>
</dbReference>
<dbReference type="FunFam" id="3.30.70.330:FF:000214">
    <property type="entry name" value="Serine/arginine-rich splicing factor 7"/>
    <property type="match status" value="1"/>
</dbReference>
<dbReference type="FunFam" id="4.10.60.10:FF:000018">
    <property type="entry name" value="Splicing factor, arginine/serine-rich 7"/>
    <property type="match status" value="1"/>
</dbReference>
<dbReference type="Gene3D" id="3.30.70.330">
    <property type="match status" value="1"/>
</dbReference>
<dbReference type="Gene3D" id="4.10.60.10">
    <property type="entry name" value="Zinc finger, CCHC-type"/>
    <property type="match status" value="1"/>
</dbReference>
<dbReference type="InterPro" id="IPR012677">
    <property type="entry name" value="Nucleotide-bd_a/b_plait_sf"/>
</dbReference>
<dbReference type="InterPro" id="IPR035979">
    <property type="entry name" value="RBD_domain_sf"/>
</dbReference>
<dbReference type="InterPro" id="IPR000504">
    <property type="entry name" value="RRM_dom"/>
</dbReference>
<dbReference type="InterPro" id="IPR050907">
    <property type="entry name" value="SRSF"/>
</dbReference>
<dbReference type="InterPro" id="IPR001878">
    <property type="entry name" value="Znf_CCHC"/>
</dbReference>
<dbReference type="InterPro" id="IPR036875">
    <property type="entry name" value="Znf_CCHC_sf"/>
</dbReference>
<dbReference type="PANTHER" id="PTHR23147">
    <property type="entry name" value="SERINE/ARGININE RICH SPLICING FACTOR"/>
    <property type="match status" value="1"/>
</dbReference>
<dbReference type="Pfam" id="PF00076">
    <property type="entry name" value="RRM_1"/>
    <property type="match status" value="1"/>
</dbReference>
<dbReference type="Pfam" id="PF00098">
    <property type="entry name" value="zf-CCHC"/>
    <property type="match status" value="1"/>
</dbReference>
<dbReference type="SMART" id="SM00360">
    <property type="entry name" value="RRM"/>
    <property type="match status" value="1"/>
</dbReference>
<dbReference type="SMART" id="SM00343">
    <property type="entry name" value="ZnF_C2HC"/>
    <property type="match status" value="1"/>
</dbReference>
<dbReference type="SUPFAM" id="SSF57756">
    <property type="entry name" value="Retrovirus zinc finger-like domains"/>
    <property type="match status" value="1"/>
</dbReference>
<dbReference type="SUPFAM" id="SSF54928">
    <property type="entry name" value="RNA-binding domain, RBD"/>
    <property type="match status" value="1"/>
</dbReference>
<dbReference type="PROSITE" id="PS50102">
    <property type="entry name" value="RRM"/>
    <property type="match status" value="1"/>
</dbReference>
<dbReference type="PROSITE" id="PS50158">
    <property type="entry name" value="ZF_CCHC"/>
    <property type="match status" value="1"/>
</dbReference>
<accession>Q6K4N0</accession>
<accession>A0A0P0VQL4</accession>
<proteinExistence type="evidence at transcript level"/>
<keyword id="KW-0479">Metal-binding</keyword>
<keyword id="KW-0507">mRNA processing</keyword>
<keyword id="KW-0508">mRNA splicing</keyword>
<keyword id="KW-0539">Nucleus</keyword>
<keyword id="KW-1185">Reference proteome</keyword>
<keyword id="KW-0862">Zinc</keyword>
<keyword id="KW-0863">Zinc-finger</keyword>
<feature type="chain" id="PRO_0000416994" description="Serine/arginine-rich splicing factor RSZ21">
    <location>
        <begin position="1"/>
        <end position="185"/>
    </location>
</feature>
<feature type="domain" description="RRM" evidence="4">
    <location>
        <begin position="2"/>
        <end position="73"/>
    </location>
</feature>
<feature type="zinc finger region" description="CCHC-type" evidence="3">
    <location>
        <begin position="86"/>
        <end position="103"/>
    </location>
</feature>
<feature type="region of interest" description="Disordered" evidence="5">
    <location>
        <begin position="104"/>
        <end position="185"/>
    </location>
</feature>
<feature type="compositionally biased region" description="Basic residues" evidence="5">
    <location>
        <begin position="113"/>
        <end position="123"/>
    </location>
</feature>
<feature type="compositionally biased region" description="Low complexity" evidence="5">
    <location>
        <begin position="124"/>
        <end position="138"/>
    </location>
</feature>
<feature type="compositionally biased region" description="Low complexity" evidence="5">
    <location>
        <begin position="151"/>
        <end position="162"/>
    </location>
</feature>
<gene>
    <name type="primary">RSZP21</name>
    <name type="synonym">RSZP21B</name>
    <name type="ordered locus">Os02g0789400</name>
    <name type="ordered locus">LOC_Os02g54770</name>
    <name type="ORF">OJ1046_F07.9</name>
    <name type="ORF">OsJ_08668</name>
    <name type="ORF">OSJNBa0054K20.35</name>
</gene>
<evidence type="ECO:0000250" key="1"/>
<evidence type="ECO:0000250" key="2">
    <source>
        <dbReference type="UniProtKB" id="O81126"/>
    </source>
</evidence>
<evidence type="ECO:0000255" key="3">
    <source>
        <dbReference type="PROSITE-ProRule" id="PRU00047"/>
    </source>
</evidence>
<evidence type="ECO:0000255" key="4">
    <source>
        <dbReference type="PROSITE-ProRule" id="PRU00176"/>
    </source>
</evidence>
<evidence type="ECO:0000256" key="5">
    <source>
        <dbReference type="SAM" id="MobiDB-lite"/>
    </source>
</evidence>
<evidence type="ECO:0000269" key="6">
    <source>
    </source>
</evidence>
<evidence type="ECO:0000305" key="7"/>
<comment type="function">
    <text evidence="1">Involved in pre-mRNA splicing.</text>
</comment>
<comment type="subcellular location">
    <subcellularLocation>
        <location evidence="2">Nucleus</location>
    </subcellularLocation>
</comment>
<comment type="tissue specificity">
    <text evidence="6">Expressed in roots, leaves and immature seeds.</text>
</comment>
<comment type="PTM">
    <text evidence="1">Extensively phosphorylated on serine residues in the RS domain.</text>
</comment>
<comment type="similarity">
    <text evidence="7">Belongs to the splicing factor SR family.</text>
</comment>
<sequence length="185" mass="21023">MARLYVGNLDPRVTSGELEDEFRVFGVLRSVWVARKPPGFAFIDFDDKRDAEDALRDLDGKNGWRVELSRNSSSRGGRDRHGGSEMKCYECGETGHFARECRLRIGPGGLGSGKRRSRSRSRSRSPQYRKSPTYGRRSYSPRDRSPRRRSVSPVRGRSYSRSPRGRGGSPYADGRDGGRYRRSRS</sequence>
<reference key="1">
    <citation type="journal article" date="2005" name="Nature">
        <title>The map-based sequence of the rice genome.</title>
        <authorList>
            <consortium name="International rice genome sequencing project (IRGSP)"/>
        </authorList>
    </citation>
    <scope>NUCLEOTIDE SEQUENCE [LARGE SCALE GENOMIC DNA]</scope>
    <source>
        <strain>cv. Nipponbare</strain>
    </source>
</reference>
<reference key="2">
    <citation type="journal article" date="2008" name="Nucleic Acids Res.">
        <title>The rice annotation project database (RAP-DB): 2008 update.</title>
        <authorList>
            <consortium name="The rice annotation project (RAP)"/>
        </authorList>
    </citation>
    <scope>GENOME REANNOTATION</scope>
    <source>
        <strain>cv. Nipponbare</strain>
    </source>
</reference>
<reference key="3">
    <citation type="journal article" date="2013" name="Rice">
        <title>Improvement of the Oryza sativa Nipponbare reference genome using next generation sequence and optical map data.</title>
        <authorList>
            <person name="Kawahara Y."/>
            <person name="de la Bastide M."/>
            <person name="Hamilton J.P."/>
            <person name="Kanamori H."/>
            <person name="McCombie W.R."/>
            <person name="Ouyang S."/>
            <person name="Schwartz D.C."/>
            <person name="Tanaka T."/>
            <person name="Wu J."/>
            <person name="Zhou S."/>
            <person name="Childs K.L."/>
            <person name="Davidson R.M."/>
            <person name="Lin H."/>
            <person name="Quesada-Ocampo L."/>
            <person name="Vaillancourt B."/>
            <person name="Sakai H."/>
            <person name="Lee S.S."/>
            <person name="Kim J."/>
            <person name="Numa H."/>
            <person name="Itoh T."/>
            <person name="Buell C.R."/>
            <person name="Matsumoto T."/>
        </authorList>
    </citation>
    <scope>GENOME REANNOTATION</scope>
    <source>
        <strain>cv. Nipponbare</strain>
    </source>
</reference>
<reference key="4">
    <citation type="journal article" date="2005" name="PLoS Biol.">
        <title>The genomes of Oryza sativa: a history of duplications.</title>
        <authorList>
            <person name="Yu J."/>
            <person name="Wang J."/>
            <person name="Lin W."/>
            <person name="Li S."/>
            <person name="Li H."/>
            <person name="Zhou J."/>
            <person name="Ni P."/>
            <person name="Dong W."/>
            <person name="Hu S."/>
            <person name="Zeng C."/>
            <person name="Zhang J."/>
            <person name="Zhang Y."/>
            <person name="Li R."/>
            <person name="Xu Z."/>
            <person name="Li S."/>
            <person name="Li X."/>
            <person name="Zheng H."/>
            <person name="Cong L."/>
            <person name="Lin L."/>
            <person name="Yin J."/>
            <person name="Geng J."/>
            <person name="Li G."/>
            <person name="Shi J."/>
            <person name="Liu J."/>
            <person name="Lv H."/>
            <person name="Li J."/>
            <person name="Wang J."/>
            <person name="Deng Y."/>
            <person name="Ran L."/>
            <person name="Shi X."/>
            <person name="Wang X."/>
            <person name="Wu Q."/>
            <person name="Li C."/>
            <person name="Ren X."/>
            <person name="Wang J."/>
            <person name="Wang X."/>
            <person name="Li D."/>
            <person name="Liu D."/>
            <person name="Zhang X."/>
            <person name="Ji Z."/>
            <person name="Zhao W."/>
            <person name="Sun Y."/>
            <person name="Zhang Z."/>
            <person name="Bao J."/>
            <person name="Han Y."/>
            <person name="Dong L."/>
            <person name="Ji J."/>
            <person name="Chen P."/>
            <person name="Wu S."/>
            <person name="Liu J."/>
            <person name="Xiao Y."/>
            <person name="Bu D."/>
            <person name="Tan J."/>
            <person name="Yang L."/>
            <person name="Ye C."/>
            <person name="Zhang J."/>
            <person name="Xu J."/>
            <person name="Zhou Y."/>
            <person name="Yu Y."/>
            <person name="Zhang B."/>
            <person name="Zhuang S."/>
            <person name="Wei H."/>
            <person name="Liu B."/>
            <person name="Lei M."/>
            <person name="Yu H."/>
            <person name="Li Y."/>
            <person name="Xu H."/>
            <person name="Wei S."/>
            <person name="He X."/>
            <person name="Fang L."/>
            <person name="Zhang Z."/>
            <person name="Zhang Y."/>
            <person name="Huang X."/>
            <person name="Su Z."/>
            <person name="Tong W."/>
            <person name="Li J."/>
            <person name="Tong Z."/>
            <person name="Li S."/>
            <person name="Ye J."/>
            <person name="Wang L."/>
            <person name="Fang L."/>
            <person name="Lei T."/>
            <person name="Chen C.-S."/>
            <person name="Chen H.-C."/>
            <person name="Xu Z."/>
            <person name="Li H."/>
            <person name="Huang H."/>
            <person name="Zhang F."/>
            <person name="Xu H."/>
            <person name="Li N."/>
            <person name="Zhao C."/>
            <person name="Li S."/>
            <person name="Dong L."/>
            <person name="Huang Y."/>
            <person name="Li L."/>
            <person name="Xi Y."/>
            <person name="Qi Q."/>
            <person name="Li W."/>
            <person name="Zhang B."/>
            <person name="Hu W."/>
            <person name="Zhang Y."/>
            <person name="Tian X."/>
            <person name="Jiao Y."/>
            <person name="Liang X."/>
            <person name="Jin J."/>
            <person name="Gao L."/>
            <person name="Zheng W."/>
            <person name="Hao B."/>
            <person name="Liu S.-M."/>
            <person name="Wang W."/>
            <person name="Yuan L."/>
            <person name="Cao M."/>
            <person name="McDermott J."/>
            <person name="Samudrala R."/>
            <person name="Wang J."/>
            <person name="Wong G.K.-S."/>
            <person name="Yang H."/>
        </authorList>
    </citation>
    <scope>NUCLEOTIDE SEQUENCE [LARGE SCALE GENOMIC DNA]</scope>
    <source>
        <strain>cv. Nipponbare</strain>
    </source>
</reference>
<reference key="5">
    <citation type="journal article" date="2003" name="Science">
        <title>Collection, mapping, and annotation of over 28,000 cDNA clones from japonica rice.</title>
        <authorList>
            <consortium name="The rice full-length cDNA consortium"/>
        </authorList>
    </citation>
    <scope>NUCLEOTIDE SEQUENCE [LARGE SCALE MRNA]</scope>
    <source>
        <strain>cv. Nipponbare</strain>
    </source>
</reference>
<reference key="6">
    <citation type="journal article" date="2006" name="Plant Cell">
        <title>The serine/arginine-rich protein family in rice plays important roles in constitutive and alternative splicing of pre-mRNA.</title>
        <authorList>
            <person name="Isshiki M."/>
            <person name="Tsumoto A."/>
            <person name="Shimamoto K."/>
        </authorList>
    </citation>
    <scope>TISSUE SPECIFICITY</scope>
    <scope>GENE FAMILY</scope>
</reference>
<reference key="7">
    <citation type="journal article" date="2010" name="Plant Cell">
        <title>Implementing a rational and consistent nomenclature for serine/arginine-rich protein splicing factors (SR proteins) in plants.</title>
        <authorList>
            <person name="Barta A."/>
            <person name="Kalyna M."/>
            <person name="Reddy A.S."/>
        </authorList>
    </citation>
    <scope>GENE FAMILY</scope>
    <scope>NOMENCLATURE</scope>
</reference>
<protein>
    <recommendedName>
        <fullName>Serine/arginine-rich splicing factor RSZ21</fullName>
    </recommendedName>
    <alternativeName>
        <fullName>RS-containing zinc finger protein 21</fullName>
        <shortName>Os-RSZ21</shortName>
        <shortName>Os-RSZp21</shortName>
    </alternativeName>
</protein>